<gene>
    <name evidence="1" type="primary">gluQ</name>
    <name type="ordered locus">Dgeo_1023</name>
</gene>
<comment type="function">
    <text evidence="1">Catalyzes the tRNA-independent activation of glutamate in presence of ATP and the subsequent transfer of glutamate onto a tRNA(Asp). Glutamate is transferred on the 2-amino-5-(4,5-dihydroxy-2-cyclopenten-1-yl) moiety of the queuosine in the wobble position of the QUC anticodon.</text>
</comment>
<comment type="cofactor">
    <cofactor evidence="1">
        <name>Zn(2+)</name>
        <dbReference type="ChEBI" id="CHEBI:29105"/>
    </cofactor>
    <text evidence="1">Binds 1 zinc ion per subunit.</text>
</comment>
<comment type="similarity">
    <text evidence="1">Belongs to the class-I aminoacyl-tRNA synthetase family. GluQ subfamily.</text>
</comment>
<reference key="1">
    <citation type="submission" date="2006-04" db="EMBL/GenBank/DDBJ databases">
        <title>Complete sequence of chromosome of Deinococcus geothermalis DSM 11300.</title>
        <authorList>
            <person name="Copeland A."/>
            <person name="Lucas S."/>
            <person name="Lapidus A."/>
            <person name="Barry K."/>
            <person name="Detter J.C."/>
            <person name="Glavina del Rio T."/>
            <person name="Hammon N."/>
            <person name="Israni S."/>
            <person name="Dalin E."/>
            <person name="Tice H."/>
            <person name="Pitluck S."/>
            <person name="Brettin T."/>
            <person name="Bruce D."/>
            <person name="Han C."/>
            <person name="Tapia R."/>
            <person name="Saunders E."/>
            <person name="Gilna P."/>
            <person name="Schmutz J."/>
            <person name="Larimer F."/>
            <person name="Land M."/>
            <person name="Hauser L."/>
            <person name="Kyrpides N."/>
            <person name="Kim E."/>
            <person name="Daly M.J."/>
            <person name="Fredrickson J.K."/>
            <person name="Makarova K.S."/>
            <person name="Gaidamakova E.K."/>
            <person name="Zhai M."/>
            <person name="Richardson P."/>
        </authorList>
    </citation>
    <scope>NUCLEOTIDE SEQUENCE [LARGE SCALE GENOMIC DNA]</scope>
    <source>
        <strain>DSM 11300 / CIP 105573 / AG-3a</strain>
    </source>
</reference>
<dbReference type="EC" id="6.1.1.-" evidence="1"/>
<dbReference type="EMBL" id="CP000359">
    <property type="protein sequence ID" value="ABF45323.1"/>
    <property type="molecule type" value="Genomic_DNA"/>
</dbReference>
<dbReference type="RefSeq" id="WP_011530160.1">
    <property type="nucleotide sequence ID" value="NC_008025.1"/>
</dbReference>
<dbReference type="SMR" id="Q1IZL1"/>
<dbReference type="STRING" id="319795.Dgeo_1023"/>
<dbReference type="KEGG" id="dge:Dgeo_1023"/>
<dbReference type="eggNOG" id="COG0008">
    <property type="taxonomic scope" value="Bacteria"/>
</dbReference>
<dbReference type="HOGENOM" id="CLU_015768_0_1_0"/>
<dbReference type="Proteomes" id="UP000002431">
    <property type="component" value="Chromosome"/>
</dbReference>
<dbReference type="GO" id="GO:0005829">
    <property type="term" value="C:cytosol"/>
    <property type="evidence" value="ECO:0007669"/>
    <property type="project" value="TreeGrafter"/>
</dbReference>
<dbReference type="GO" id="GO:0005524">
    <property type="term" value="F:ATP binding"/>
    <property type="evidence" value="ECO:0007669"/>
    <property type="project" value="UniProtKB-KW"/>
</dbReference>
<dbReference type="GO" id="GO:0004818">
    <property type="term" value="F:glutamate-tRNA ligase activity"/>
    <property type="evidence" value="ECO:0007669"/>
    <property type="project" value="TreeGrafter"/>
</dbReference>
<dbReference type="GO" id="GO:0008270">
    <property type="term" value="F:zinc ion binding"/>
    <property type="evidence" value="ECO:0007669"/>
    <property type="project" value="UniProtKB-UniRule"/>
</dbReference>
<dbReference type="GO" id="GO:0006424">
    <property type="term" value="P:glutamyl-tRNA aminoacylation"/>
    <property type="evidence" value="ECO:0007669"/>
    <property type="project" value="InterPro"/>
</dbReference>
<dbReference type="GO" id="GO:0006400">
    <property type="term" value="P:tRNA modification"/>
    <property type="evidence" value="ECO:0007669"/>
    <property type="project" value="InterPro"/>
</dbReference>
<dbReference type="Gene3D" id="3.40.50.620">
    <property type="entry name" value="HUPs"/>
    <property type="match status" value="1"/>
</dbReference>
<dbReference type="HAMAP" id="MF_01428">
    <property type="entry name" value="Glu_Q_tRNA_synth"/>
    <property type="match status" value="1"/>
</dbReference>
<dbReference type="InterPro" id="IPR001412">
    <property type="entry name" value="aa-tRNA-synth_I_CS"/>
</dbReference>
<dbReference type="InterPro" id="IPR022380">
    <property type="entry name" value="Glu-Q_tRNA(Asp)_Synthase"/>
</dbReference>
<dbReference type="InterPro" id="IPR000924">
    <property type="entry name" value="Glu/Gln-tRNA-synth"/>
</dbReference>
<dbReference type="InterPro" id="IPR020058">
    <property type="entry name" value="Glu/Gln-tRNA-synth_Ib_cat-dom"/>
</dbReference>
<dbReference type="InterPro" id="IPR049940">
    <property type="entry name" value="GluQ/Sye"/>
</dbReference>
<dbReference type="InterPro" id="IPR014729">
    <property type="entry name" value="Rossmann-like_a/b/a_fold"/>
</dbReference>
<dbReference type="NCBIfam" id="NF004314">
    <property type="entry name" value="PRK05710.1-3"/>
    <property type="match status" value="1"/>
</dbReference>
<dbReference type="NCBIfam" id="NF004315">
    <property type="entry name" value="PRK05710.1-4"/>
    <property type="match status" value="1"/>
</dbReference>
<dbReference type="NCBIfam" id="TIGR03838">
    <property type="entry name" value="queuosine_YadB"/>
    <property type="match status" value="1"/>
</dbReference>
<dbReference type="PANTHER" id="PTHR43311">
    <property type="entry name" value="GLUTAMATE--TRNA LIGASE"/>
    <property type="match status" value="1"/>
</dbReference>
<dbReference type="PANTHER" id="PTHR43311:SF1">
    <property type="entry name" value="GLUTAMYL-Q TRNA(ASP) SYNTHETASE"/>
    <property type="match status" value="1"/>
</dbReference>
<dbReference type="Pfam" id="PF00749">
    <property type="entry name" value="tRNA-synt_1c"/>
    <property type="match status" value="1"/>
</dbReference>
<dbReference type="PRINTS" id="PR00987">
    <property type="entry name" value="TRNASYNTHGLU"/>
</dbReference>
<dbReference type="SUPFAM" id="SSF52374">
    <property type="entry name" value="Nucleotidylyl transferase"/>
    <property type="match status" value="1"/>
</dbReference>
<dbReference type="PROSITE" id="PS00178">
    <property type="entry name" value="AA_TRNA_LIGASE_I"/>
    <property type="match status" value="1"/>
</dbReference>
<name>GLUQ_DEIGD</name>
<feature type="chain" id="PRO_1000024354" description="Glutamyl-Q tRNA(Asp) synthetase">
    <location>
        <begin position="1"/>
        <end position="303"/>
    </location>
</feature>
<feature type="short sequence motif" description="'HIGH' region">
    <location>
        <begin position="12"/>
        <end position="22"/>
    </location>
</feature>
<feature type="short sequence motif" description="'KMSKS' region">
    <location>
        <begin position="240"/>
        <end position="244"/>
    </location>
</feature>
<feature type="binding site" evidence="1">
    <location>
        <begin position="9"/>
        <end position="13"/>
    </location>
    <ligand>
        <name>L-glutamate</name>
        <dbReference type="ChEBI" id="CHEBI:29985"/>
    </ligand>
</feature>
<feature type="binding site" evidence="1">
    <location>
        <position position="45"/>
    </location>
    <ligand>
        <name>L-glutamate</name>
        <dbReference type="ChEBI" id="CHEBI:29985"/>
    </ligand>
</feature>
<feature type="binding site" evidence="1">
    <location>
        <position position="100"/>
    </location>
    <ligand>
        <name>Zn(2+)</name>
        <dbReference type="ChEBI" id="CHEBI:29105"/>
    </ligand>
</feature>
<feature type="binding site" evidence="1">
    <location>
        <position position="102"/>
    </location>
    <ligand>
        <name>Zn(2+)</name>
        <dbReference type="ChEBI" id="CHEBI:29105"/>
    </ligand>
</feature>
<feature type="binding site" evidence="1">
    <location>
        <position position="125"/>
    </location>
    <ligand>
        <name>Zn(2+)</name>
        <dbReference type="ChEBI" id="CHEBI:29105"/>
    </ligand>
</feature>
<feature type="binding site" evidence="1">
    <location>
        <position position="129"/>
    </location>
    <ligand>
        <name>Zn(2+)</name>
        <dbReference type="ChEBI" id="CHEBI:29105"/>
    </ligand>
</feature>
<feature type="binding site" evidence="1">
    <location>
        <position position="184"/>
    </location>
    <ligand>
        <name>L-glutamate</name>
        <dbReference type="ChEBI" id="CHEBI:29985"/>
    </ligand>
</feature>
<feature type="binding site" evidence="1">
    <location>
        <position position="202"/>
    </location>
    <ligand>
        <name>L-glutamate</name>
        <dbReference type="ChEBI" id="CHEBI:29985"/>
    </ligand>
</feature>
<feature type="binding site" evidence="1">
    <location>
        <position position="243"/>
    </location>
    <ligand>
        <name>ATP</name>
        <dbReference type="ChEBI" id="CHEBI:30616"/>
    </ligand>
</feature>
<accession>Q1IZL1</accession>
<protein>
    <recommendedName>
        <fullName evidence="1">Glutamyl-Q tRNA(Asp) synthetase</fullName>
        <shortName evidence="1">Glu-Q-RSs</shortName>
        <ecNumber evidence="1">6.1.1.-</ecNumber>
    </recommendedName>
</protein>
<organism>
    <name type="scientific">Deinococcus geothermalis (strain DSM 11300 / CIP 105573 / AG-3a)</name>
    <dbReference type="NCBI Taxonomy" id="319795"/>
    <lineage>
        <taxon>Bacteria</taxon>
        <taxon>Thermotogati</taxon>
        <taxon>Deinococcota</taxon>
        <taxon>Deinococci</taxon>
        <taxon>Deinococcales</taxon>
        <taxon>Deinococcaceae</taxon>
        <taxon>Deinococcus</taxon>
    </lineage>
</organism>
<sequence>MNVLPVVGRFAPSPTGAMHLGNARTALLAWLHSRALGGLHLLRFEDLDTGRVRSWAYDTTRRDLEWLGLDWDAEFRQSERLPVYADAVSRLTAAGETYPCTCTRREIRQAIEDSAGAPHGHEPVYPGTCRLHGAMPGRPAALRWHVPDGTVCVTDALTCATLCQNLPAEVGDFVLRRNDGVYAYHLAVVVDDALMGVTDVVRGADLWTATPRQVALGRALGSAPPRYLHVPLMTDFRGERLAKRGGAPPLRALREGGEEAGRVLSALARSLGWAVPERVSAAELLPLWRAQLTRAGFFINPQS</sequence>
<keyword id="KW-0030">Aminoacyl-tRNA synthetase</keyword>
<keyword id="KW-0067">ATP-binding</keyword>
<keyword id="KW-0436">Ligase</keyword>
<keyword id="KW-0479">Metal-binding</keyword>
<keyword id="KW-0547">Nucleotide-binding</keyword>
<keyword id="KW-0862">Zinc</keyword>
<evidence type="ECO:0000255" key="1">
    <source>
        <dbReference type="HAMAP-Rule" id="MF_01428"/>
    </source>
</evidence>
<proteinExistence type="inferred from homology"/>